<feature type="chain" id="PRO_1000213357" description="3-isopropylmalate dehydratase small subunit">
    <location>
        <begin position="1"/>
        <end position="199"/>
    </location>
</feature>
<sequence>MQEFKQHTGLAVPLDSANVDTDQIIPKQFLQRVSKLGFGQNLFHDWRFLDEAGTQPNPEFVLNFPRYKGASILLARENFGNGSSREHAPWALADYGLKAVIAPSFADIFYGNSLNNGLLVVRLKDDEVDALFKLVEANEGQNITVDLEAKEVRAADYCFKFEIDDFRRYCIMNGLDNIGLTLQHADAIDAYEAKQPVWL</sequence>
<keyword id="KW-0028">Amino-acid biosynthesis</keyword>
<keyword id="KW-0100">Branched-chain amino acid biosynthesis</keyword>
<keyword id="KW-0432">Leucine biosynthesis</keyword>
<keyword id="KW-0456">Lyase</keyword>
<keyword id="KW-1185">Reference proteome</keyword>
<dbReference type="EC" id="4.2.1.33" evidence="1"/>
<dbReference type="EMBL" id="CP001616">
    <property type="protein sequence ID" value="ACQ92308.1"/>
    <property type="molecule type" value="Genomic_DNA"/>
</dbReference>
<dbReference type="RefSeq" id="WP_012728907.1">
    <property type="nucleotide sequence ID" value="NC_012691.1"/>
</dbReference>
<dbReference type="SMR" id="C4LAV4"/>
<dbReference type="STRING" id="595494.Tola_0679"/>
<dbReference type="KEGG" id="tau:Tola_0679"/>
<dbReference type="eggNOG" id="COG0066">
    <property type="taxonomic scope" value="Bacteria"/>
</dbReference>
<dbReference type="HOGENOM" id="CLU_081378_0_3_6"/>
<dbReference type="OrthoDB" id="9777465at2"/>
<dbReference type="UniPathway" id="UPA00048">
    <property type="reaction ID" value="UER00071"/>
</dbReference>
<dbReference type="Proteomes" id="UP000009073">
    <property type="component" value="Chromosome"/>
</dbReference>
<dbReference type="GO" id="GO:0009316">
    <property type="term" value="C:3-isopropylmalate dehydratase complex"/>
    <property type="evidence" value="ECO:0007669"/>
    <property type="project" value="InterPro"/>
</dbReference>
<dbReference type="GO" id="GO:0003861">
    <property type="term" value="F:3-isopropylmalate dehydratase activity"/>
    <property type="evidence" value="ECO:0007669"/>
    <property type="project" value="UniProtKB-UniRule"/>
</dbReference>
<dbReference type="GO" id="GO:0009098">
    <property type="term" value="P:L-leucine biosynthetic process"/>
    <property type="evidence" value="ECO:0007669"/>
    <property type="project" value="UniProtKB-UniRule"/>
</dbReference>
<dbReference type="CDD" id="cd01577">
    <property type="entry name" value="IPMI_Swivel"/>
    <property type="match status" value="1"/>
</dbReference>
<dbReference type="FunFam" id="3.20.19.10:FF:000003">
    <property type="entry name" value="3-isopropylmalate dehydratase small subunit"/>
    <property type="match status" value="1"/>
</dbReference>
<dbReference type="Gene3D" id="3.20.19.10">
    <property type="entry name" value="Aconitase, domain 4"/>
    <property type="match status" value="1"/>
</dbReference>
<dbReference type="HAMAP" id="MF_01031">
    <property type="entry name" value="LeuD_type1"/>
    <property type="match status" value="1"/>
</dbReference>
<dbReference type="InterPro" id="IPR004431">
    <property type="entry name" value="3-IsopropMal_deHydase_ssu"/>
</dbReference>
<dbReference type="InterPro" id="IPR015928">
    <property type="entry name" value="Aconitase/3IPM_dehydase_swvl"/>
</dbReference>
<dbReference type="InterPro" id="IPR000573">
    <property type="entry name" value="AconitaseA/IPMdHydase_ssu_swvl"/>
</dbReference>
<dbReference type="InterPro" id="IPR033940">
    <property type="entry name" value="IPMI_Swivel"/>
</dbReference>
<dbReference type="InterPro" id="IPR050075">
    <property type="entry name" value="LeuD"/>
</dbReference>
<dbReference type="NCBIfam" id="TIGR00171">
    <property type="entry name" value="leuD"/>
    <property type="match status" value="1"/>
</dbReference>
<dbReference type="NCBIfam" id="NF002458">
    <property type="entry name" value="PRK01641.1"/>
    <property type="match status" value="1"/>
</dbReference>
<dbReference type="PANTHER" id="PTHR43345:SF5">
    <property type="entry name" value="3-ISOPROPYLMALATE DEHYDRATASE SMALL SUBUNIT"/>
    <property type="match status" value="1"/>
</dbReference>
<dbReference type="PANTHER" id="PTHR43345">
    <property type="entry name" value="3-ISOPROPYLMALATE DEHYDRATASE SMALL SUBUNIT 2-RELATED-RELATED"/>
    <property type="match status" value="1"/>
</dbReference>
<dbReference type="Pfam" id="PF00694">
    <property type="entry name" value="Aconitase_C"/>
    <property type="match status" value="1"/>
</dbReference>
<dbReference type="SUPFAM" id="SSF52016">
    <property type="entry name" value="LeuD/IlvD-like"/>
    <property type="match status" value="1"/>
</dbReference>
<protein>
    <recommendedName>
        <fullName evidence="1">3-isopropylmalate dehydratase small subunit</fullName>
        <ecNumber evidence="1">4.2.1.33</ecNumber>
    </recommendedName>
    <alternativeName>
        <fullName evidence="1">Alpha-IPM isomerase</fullName>
        <shortName evidence="1">IPMI</shortName>
    </alternativeName>
    <alternativeName>
        <fullName evidence="1">Isopropylmalate isomerase</fullName>
    </alternativeName>
</protein>
<organism>
    <name type="scientific">Tolumonas auensis (strain DSM 9187 / NBRC 110442 / TA 4)</name>
    <dbReference type="NCBI Taxonomy" id="595494"/>
    <lineage>
        <taxon>Bacteria</taxon>
        <taxon>Pseudomonadati</taxon>
        <taxon>Pseudomonadota</taxon>
        <taxon>Gammaproteobacteria</taxon>
        <taxon>Aeromonadales</taxon>
        <taxon>Aeromonadaceae</taxon>
        <taxon>Tolumonas</taxon>
    </lineage>
</organism>
<gene>
    <name evidence="1" type="primary">leuD</name>
    <name type="ordered locus">Tola_0679</name>
</gene>
<evidence type="ECO:0000255" key="1">
    <source>
        <dbReference type="HAMAP-Rule" id="MF_01031"/>
    </source>
</evidence>
<name>LEUD_TOLAT</name>
<proteinExistence type="inferred from homology"/>
<comment type="function">
    <text evidence="1">Catalyzes the isomerization between 2-isopropylmalate and 3-isopropylmalate, via the formation of 2-isopropylmaleate.</text>
</comment>
<comment type="catalytic activity">
    <reaction evidence="1">
        <text>(2R,3S)-3-isopropylmalate = (2S)-2-isopropylmalate</text>
        <dbReference type="Rhea" id="RHEA:32287"/>
        <dbReference type="ChEBI" id="CHEBI:1178"/>
        <dbReference type="ChEBI" id="CHEBI:35121"/>
        <dbReference type="EC" id="4.2.1.33"/>
    </reaction>
</comment>
<comment type="pathway">
    <text evidence="1">Amino-acid biosynthesis; L-leucine biosynthesis; L-leucine from 3-methyl-2-oxobutanoate: step 2/4.</text>
</comment>
<comment type="subunit">
    <text evidence="1">Heterodimer of LeuC and LeuD.</text>
</comment>
<comment type="similarity">
    <text evidence="1">Belongs to the LeuD family. LeuD type 1 subfamily.</text>
</comment>
<reference key="1">
    <citation type="submission" date="2009-05" db="EMBL/GenBank/DDBJ databases">
        <title>Complete sequence of Tolumonas auensis DSM 9187.</title>
        <authorList>
            <consortium name="US DOE Joint Genome Institute"/>
            <person name="Lucas S."/>
            <person name="Copeland A."/>
            <person name="Lapidus A."/>
            <person name="Glavina del Rio T."/>
            <person name="Tice H."/>
            <person name="Bruce D."/>
            <person name="Goodwin L."/>
            <person name="Pitluck S."/>
            <person name="Chertkov O."/>
            <person name="Brettin T."/>
            <person name="Detter J.C."/>
            <person name="Han C."/>
            <person name="Larimer F."/>
            <person name="Land M."/>
            <person name="Hauser L."/>
            <person name="Kyrpides N."/>
            <person name="Mikhailova N."/>
            <person name="Spring S."/>
            <person name="Beller H."/>
        </authorList>
    </citation>
    <scope>NUCLEOTIDE SEQUENCE [LARGE SCALE GENOMIC DNA]</scope>
    <source>
        <strain>DSM 9187 / NBRC 110442 / TA 4</strain>
    </source>
</reference>
<accession>C4LAV4</accession>